<gene>
    <name evidence="1" type="primary">thiC</name>
    <name type="ordered locus">CBO2911</name>
    <name type="ordered locus">CLC_2807</name>
</gene>
<proteinExistence type="inferred from homology"/>
<sequence length="437" mass="48859">MNYTTQMDAAKKGIVTKEMEIVAKKENMNVKDLMELVSKGKVAIPANKNHKSLDPEGIGQGLRTKINVNLGISKDCYNIDMELEKVQKAIDMKAEAIMDLSCFGKTEEFRKRLIDMSPAIIGTVPIYDAVGFYDKELKDITSEEFLKVAEKHAENGADFLTIHVGMNRKTAATFKKNPRRMNIVSRGGSLLYAWMELNNKENPFYEGFDKLLDICEKYDVTLSLGDACRPGCIEDSTDASQIEELIALGELTKRAWERNVQVIIEGPGHMTLDEIETNMKIEKKLCHGAPFYVLGPIVTDIAPGYDHITSAIGGAIAATHGADFLCYVTPAEHLRLPNLDDMKEGIIASKIAAHAADLAKGVKGARDWDNAMAKARRDLDWERMFELSIDEEKARRYREESKAKSKDSCTMCGKMCAVRNMNRVTEGKDLNMLRDDD</sequence>
<name>THIC_CLOBH</name>
<protein>
    <recommendedName>
        <fullName evidence="1">Phosphomethylpyrimidine synthase</fullName>
        <ecNumber evidence="1">4.1.99.17</ecNumber>
    </recommendedName>
    <alternativeName>
        <fullName evidence="1">Hydroxymethylpyrimidine phosphate synthase</fullName>
        <shortName evidence="1">HMP-P synthase</shortName>
        <shortName evidence="1">HMP-phosphate synthase</shortName>
        <shortName evidence="1">HMPP synthase</shortName>
    </alternativeName>
    <alternativeName>
        <fullName evidence="1">Thiamine biosynthesis protein ThiC</fullName>
    </alternativeName>
</protein>
<reference key="1">
    <citation type="journal article" date="2007" name="Genome Res.">
        <title>Genome sequence of a proteolytic (Group I) Clostridium botulinum strain Hall A and comparative analysis of the clostridial genomes.</title>
        <authorList>
            <person name="Sebaihia M."/>
            <person name="Peck M.W."/>
            <person name="Minton N.P."/>
            <person name="Thomson N.R."/>
            <person name="Holden M.T.G."/>
            <person name="Mitchell W.J."/>
            <person name="Carter A.T."/>
            <person name="Bentley S.D."/>
            <person name="Mason D.R."/>
            <person name="Crossman L."/>
            <person name="Paul C.J."/>
            <person name="Ivens A."/>
            <person name="Wells-Bennik M.H.J."/>
            <person name="Davis I.J."/>
            <person name="Cerdeno-Tarraga A.M."/>
            <person name="Churcher C."/>
            <person name="Quail M.A."/>
            <person name="Chillingworth T."/>
            <person name="Feltwell T."/>
            <person name="Fraser A."/>
            <person name="Goodhead I."/>
            <person name="Hance Z."/>
            <person name="Jagels K."/>
            <person name="Larke N."/>
            <person name="Maddison M."/>
            <person name="Moule S."/>
            <person name="Mungall K."/>
            <person name="Norbertczak H."/>
            <person name="Rabbinowitsch E."/>
            <person name="Sanders M."/>
            <person name="Simmonds M."/>
            <person name="White B."/>
            <person name="Whithead S."/>
            <person name="Parkhill J."/>
        </authorList>
    </citation>
    <scope>NUCLEOTIDE SEQUENCE [LARGE SCALE GENOMIC DNA]</scope>
    <source>
        <strain>Hall / ATCC 3502 / NCTC 13319 / Type A</strain>
    </source>
</reference>
<reference key="2">
    <citation type="journal article" date="2007" name="PLoS ONE">
        <title>Analysis of the neurotoxin complex genes in Clostridium botulinum A1-A4 and B1 strains: BoNT/A3, /Ba4 and /B1 clusters are located within plasmids.</title>
        <authorList>
            <person name="Smith T.J."/>
            <person name="Hill K.K."/>
            <person name="Foley B.T."/>
            <person name="Detter J.C."/>
            <person name="Munk A.C."/>
            <person name="Bruce D.C."/>
            <person name="Doggett N.A."/>
            <person name="Smith L.A."/>
            <person name="Marks J.D."/>
            <person name="Xie G."/>
            <person name="Brettin T.S."/>
        </authorList>
    </citation>
    <scope>NUCLEOTIDE SEQUENCE [LARGE SCALE GENOMIC DNA]</scope>
    <source>
        <strain>Hall / ATCC 3502 / NCTC 13319 / Type A</strain>
    </source>
</reference>
<feature type="chain" id="PRO_1000057589" description="Phosphomethylpyrimidine synthase">
    <location>
        <begin position="1"/>
        <end position="437"/>
    </location>
</feature>
<feature type="binding site" evidence="1">
    <location>
        <position position="69"/>
    </location>
    <ligand>
        <name>substrate</name>
    </ligand>
</feature>
<feature type="binding site" evidence="1">
    <location>
        <position position="98"/>
    </location>
    <ligand>
        <name>substrate</name>
    </ligand>
</feature>
<feature type="binding site" evidence="1">
    <location>
        <position position="127"/>
    </location>
    <ligand>
        <name>substrate</name>
    </ligand>
</feature>
<feature type="binding site" evidence="1">
    <location>
        <position position="163"/>
    </location>
    <ligand>
        <name>substrate</name>
    </ligand>
</feature>
<feature type="binding site" evidence="1">
    <location>
        <begin position="185"/>
        <end position="187"/>
    </location>
    <ligand>
        <name>substrate</name>
    </ligand>
</feature>
<feature type="binding site" evidence="1">
    <location>
        <begin position="226"/>
        <end position="229"/>
    </location>
    <ligand>
        <name>substrate</name>
    </ligand>
</feature>
<feature type="binding site" evidence="1">
    <location>
        <position position="265"/>
    </location>
    <ligand>
        <name>substrate</name>
    </ligand>
</feature>
<feature type="binding site" evidence="1">
    <location>
        <position position="269"/>
    </location>
    <ligand>
        <name>Zn(2+)</name>
        <dbReference type="ChEBI" id="CHEBI:29105"/>
    </ligand>
</feature>
<feature type="binding site" evidence="1">
    <location>
        <position position="292"/>
    </location>
    <ligand>
        <name>substrate</name>
    </ligand>
</feature>
<feature type="binding site" evidence="1">
    <location>
        <position position="333"/>
    </location>
    <ligand>
        <name>Zn(2+)</name>
        <dbReference type="ChEBI" id="CHEBI:29105"/>
    </ligand>
</feature>
<feature type="binding site" evidence="1">
    <location>
        <position position="409"/>
    </location>
    <ligand>
        <name>[4Fe-4S] cluster</name>
        <dbReference type="ChEBI" id="CHEBI:49883"/>
        <note>4Fe-4S-S-AdoMet</note>
    </ligand>
</feature>
<feature type="binding site" evidence="1">
    <location>
        <position position="412"/>
    </location>
    <ligand>
        <name>[4Fe-4S] cluster</name>
        <dbReference type="ChEBI" id="CHEBI:49883"/>
        <note>4Fe-4S-S-AdoMet</note>
    </ligand>
</feature>
<feature type="binding site" evidence="1">
    <location>
        <position position="416"/>
    </location>
    <ligand>
        <name>[4Fe-4S] cluster</name>
        <dbReference type="ChEBI" id="CHEBI:49883"/>
        <note>4Fe-4S-S-AdoMet</note>
    </ligand>
</feature>
<organism>
    <name type="scientific">Clostridium botulinum (strain Hall / ATCC 3502 / NCTC 13319 / Type A)</name>
    <dbReference type="NCBI Taxonomy" id="441771"/>
    <lineage>
        <taxon>Bacteria</taxon>
        <taxon>Bacillati</taxon>
        <taxon>Bacillota</taxon>
        <taxon>Clostridia</taxon>
        <taxon>Eubacteriales</taxon>
        <taxon>Clostridiaceae</taxon>
        <taxon>Clostridium</taxon>
    </lineage>
</organism>
<accession>A5I5Z5</accession>
<accession>A7G777</accession>
<dbReference type="EC" id="4.1.99.17" evidence="1"/>
<dbReference type="EMBL" id="CP000727">
    <property type="protein sequence ID" value="ABS38730.1"/>
    <property type="molecule type" value="Genomic_DNA"/>
</dbReference>
<dbReference type="EMBL" id="AM412317">
    <property type="protein sequence ID" value="CAL84475.1"/>
    <property type="molecule type" value="Genomic_DNA"/>
</dbReference>
<dbReference type="RefSeq" id="WP_012047970.1">
    <property type="nucleotide sequence ID" value="NC_009698.1"/>
</dbReference>
<dbReference type="RefSeq" id="YP_001255407.1">
    <property type="nucleotide sequence ID" value="NC_009495.1"/>
</dbReference>
<dbReference type="RefSeq" id="YP_001388642.1">
    <property type="nucleotide sequence ID" value="NC_009698.1"/>
</dbReference>
<dbReference type="SMR" id="A5I5Z5"/>
<dbReference type="GeneID" id="5186957"/>
<dbReference type="KEGG" id="cbh:CLC_2807"/>
<dbReference type="KEGG" id="cbo:CBO2911"/>
<dbReference type="PATRIC" id="fig|413999.7.peg.2891"/>
<dbReference type="HOGENOM" id="CLU_013181_2_2_9"/>
<dbReference type="UniPathway" id="UPA00060"/>
<dbReference type="PRO" id="PR:A5I5Z5"/>
<dbReference type="Proteomes" id="UP000001986">
    <property type="component" value="Chromosome"/>
</dbReference>
<dbReference type="GO" id="GO:0005829">
    <property type="term" value="C:cytosol"/>
    <property type="evidence" value="ECO:0000318"/>
    <property type="project" value="GO_Central"/>
</dbReference>
<dbReference type="GO" id="GO:0051539">
    <property type="term" value="F:4 iron, 4 sulfur cluster binding"/>
    <property type="evidence" value="ECO:0007669"/>
    <property type="project" value="UniProtKB-KW"/>
</dbReference>
<dbReference type="GO" id="GO:0016830">
    <property type="term" value="F:carbon-carbon lyase activity"/>
    <property type="evidence" value="ECO:0007669"/>
    <property type="project" value="InterPro"/>
</dbReference>
<dbReference type="GO" id="GO:0008270">
    <property type="term" value="F:zinc ion binding"/>
    <property type="evidence" value="ECO:0007669"/>
    <property type="project" value="UniProtKB-UniRule"/>
</dbReference>
<dbReference type="GO" id="GO:0009228">
    <property type="term" value="P:thiamine biosynthetic process"/>
    <property type="evidence" value="ECO:0000318"/>
    <property type="project" value="GO_Central"/>
</dbReference>
<dbReference type="GO" id="GO:0009229">
    <property type="term" value="P:thiamine diphosphate biosynthetic process"/>
    <property type="evidence" value="ECO:0007669"/>
    <property type="project" value="UniProtKB-UniRule"/>
</dbReference>
<dbReference type="FunFam" id="3.20.20.540:FF:000001">
    <property type="entry name" value="Phosphomethylpyrimidine synthase"/>
    <property type="match status" value="1"/>
</dbReference>
<dbReference type="Gene3D" id="6.10.250.620">
    <property type="match status" value="1"/>
</dbReference>
<dbReference type="Gene3D" id="3.20.20.540">
    <property type="entry name" value="Radical SAM ThiC family, central domain"/>
    <property type="match status" value="1"/>
</dbReference>
<dbReference type="HAMAP" id="MF_00089">
    <property type="entry name" value="ThiC"/>
    <property type="match status" value="1"/>
</dbReference>
<dbReference type="InterPro" id="IPR037509">
    <property type="entry name" value="ThiC"/>
</dbReference>
<dbReference type="InterPro" id="IPR038521">
    <property type="entry name" value="ThiC/Bza_core_dom"/>
</dbReference>
<dbReference type="InterPro" id="IPR002817">
    <property type="entry name" value="ThiC/BzaA/B"/>
</dbReference>
<dbReference type="NCBIfam" id="NF009895">
    <property type="entry name" value="PRK13352.1"/>
    <property type="match status" value="1"/>
</dbReference>
<dbReference type="NCBIfam" id="TIGR00190">
    <property type="entry name" value="thiC"/>
    <property type="match status" value="1"/>
</dbReference>
<dbReference type="PANTHER" id="PTHR30557:SF1">
    <property type="entry name" value="PHOSPHOMETHYLPYRIMIDINE SYNTHASE, CHLOROPLASTIC"/>
    <property type="match status" value="1"/>
</dbReference>
<dbReference type="PANTHER" id="PTHR30557">
    <property type="entry name" value="THIAMINE BIOSYNTHESIS PROTEIN THIC"/>
    <property type="match status" value="1"/>
</dbReference>
<dbReference type="Pfam" id="PF01964">
    <property type="entry name" value="ThiC_Rad_SAM"/>
    <property type="match status" value="1"/>
</dbReference>
<dbReference type="SFLD" id="SFLDF00407">
    <property type="entry name" value="phosphomethylpyrimidine_syntha"/>
    <property type="match status" value="1"/>
</dbReference>
<dbReference type="SFLD" id="SFLDG01114">
    <property type="entry name" value="phosphomethylpyrimidine_syntha"/>
    <property type="match status" value="1"/>
</dbReference>
<dbReference type="SFLD" id="SFLDS00113">
    <property type="entry name" value="Radical_SAM_Phosphomethylpyrim"/>
    <property type="match status" value="1"/>
</dbReference>
<evidence type="ECO:0000255" key="1">
    <source>
        <dbReference type="HAMAP-Rule" id="MF_00089"/>
    </source>
</evidence>
<comment type="function">
    <text evidence="1">Catalyzes the synthesis of the hydroxymethylpyrimidine phosphate (HMP-P) moiety of thiamine from aminoimidazole ribotide (AIR) in a radical S-adenosyl-L-methionine (SAM)-dependent reaction.</text>
</comment>
<comment type="catalytic activity">
    <reaction evidence="1">
        <text>5-amino-1-(5-phospho-beta-D-ribosyl)imidazole + S-adenosyl-L-methionine = 4-amino-2-methyl-5-(phosphooxymethyl)pyrimidine + CO + 5'-deoxyadenosine + formate + L-methionine + 3 H(+)</text>
        <dbReference type="Rhea" id="RHEA:24840"/>
        <dbReference type="ChEBI" id="CHEBI:15378"/>
        <dbReference type="ChEBI" id="CHEBI:15740"/>
        <dbReference type="ChEBI" id="CHEBI:17245"/>
        <dbReference type="ChEBI" id="CHEBI:17319"/>
        <dbReference type="ChEBI" id="CHEBI:57844"/>
        <dbReference type="ChEBI" id="CHEBI:58354"/>
        <dbReference type="ChEBI" id="CHEBI:59789"/>
        <dbReference type="ChEBI" id="CHEBI:137981"/>
        <dbReference type="EC" id="4.1.99.17"/>
    </reaction>
</comment>
<comment type="cofactor">
    <cofactor evidence="1">
        <name>[4Fe-4S] cluster</name>
        <dbReference type="ChEBI" id="CHEBI:49883"/>
    </cofactor>
    <text evidence="1">Binds 1 [4Fe-4S] cluster per subunit. The cluster is coordinated with 3 cysteines and an exchangeable S-adenosyl-L-methionine.</text>
</comment>
<comment type="pathway">
    <text evidence="1">Cofactor biosynthesis; thiamine diphosphate biosynthesis.</text>
</comment>
<comment type="similarity">
    <text evidence="1">Belongs to the ThiC family.</text>
</comment>
<keyword id="KW-0004">4Fe-4S</keyword>
<keyword id="KW-0408">Iron</keyword>
<keyword id="KW-0411">Iron-sulfur</keyword>
<keyword id="KW-0456">Lyase</keyword>
<keyword id="KW-0479">Metal-binding</keyword>
<keyword id="KW-1185">Reference proteome</keyword>
<keyword id="KW-0949">S-adenosyl-L-methionine</keyword>
<keyword id="KW-0784">Thiamine biosynthesis</keyword>
<keyword id="KW-0862">Zinc</keyword>